<accession>B5EUH1</accession>
<organism>
    <name type="scientific">Aliivibrio fischeri (strain MJ11)</name>
    <name type="common">Vibrio fischeri</name>
    <dbReference type="NCBI Taxonomy" id="388396"/>
    <lineage>
        <taxon>Bacteria</taxon>
        <taxon>Pseudomonadati</taxon>
        <taxon>Pseudomonadota</taxon>
        <taxon>Gammaproteobacteria</taxon>
        <taxon>Vibrionales</taxon>
        <taxon>Vibrionaceae</taxon>
        <taxon>Aliivibrio</taxon>
    </lineage>
</organism>
<protein>
    <recommendedName>
        <fullName evidence="1">Glycine dehydrogenase (decarboxylating)</fullName>
        <ecNumber evidence="1">1.4.4.2</ecNumber>
    </recommendedName>
    <alternativeName>
        <fullName evidence="1">Glycine cleavage system P-protein</fullName>
    </alternativeName>
    <alternativeName>
        <fullName evidence="1">Glycine decarboxylase</fullName>
    </alternativeName>
    <alternativeName>
        <fullName evidence="1">Glycine dehydrogenase (aminomethyl-transferring)</fullName>
    </alternativeName>
</protein>
<comment type="function">
    <text evidence="1">The glycine cleavage system catalyzes the degradation of glycine. The P protein binds the alpha-amino group of glycine through its pyridoxal phosphate cofactor; CO(2) is released and the remaining methylamine moiety is then transferred to the lipoamide cofactor of the H protein.</text>
</comment>
<comment type="catalytic activity">
    <reaction evidence="1">
        <text>N(6)-[(R)-lipoyl]-L-lysyl-[glycine-cleavage complex H protein] + glycine + H(+) = N(6)-[(R)-S(8)-aminomethyldihydrolipoyl]-L-lysyl-[glycine-cleavage complex H protein] + CO2</text>
        <dbReference type="Rhea" id="RHEA:24304"/>
        <dbReference type="Rhea" id="RHEA-COMP:10494"/>
        <dbReference type="Rhea" id="RHEA-COMP:10495"/>
        <dbReference type="ChEBI" id="CHEBI:15378"/>
        <dbReference type="ChEBI" id="CHEBI:16526"/>
        <dbReference type="ChEBI" id="CHEBI:57305"/>
        <dbReference type="ChEBI" id="CHEBI:83099"/>
        <dbReference type="ChEBI" id="CHEBI:83143"/>
        <dbReference type="EC" id="1.4.4.2"/>
    </reaction>
</comment>
<comment type="cofactor">
    <cofactor evidence="1">
        <name>pyridoxal 5'-phosphate</name>
        <dbReference type="ChEBI" id="CHEBI:597326"/>
    </cofactor>
</comment>
<comment type="subunit">
    <text evidence="1">The glycine cleavage system is composed of four proteins: P, T, L and H.</text>
</comment>
<comment type="similarity">
    <text evidence="1">Belongs to the GcvP family.</text>
</comment>
<dbReference type="EC" id="1.4.4.2" evidence="1"/>
<dbReference type="EMBL" id="CP001133">
    <property type="protein sequence ID" value="ACH64611.1"/>
    <property type="molecule type" value="Genomic_DNA"/>
</dbReference>
<dbReference type="RefSeq" id="WP_012535657.1">
    <property type="nucleotide sequence ID" value="NC_011186.1"/>
</dbReference>
<dbReference type="SMR" id="B5EUH1"/>
<dbReference type="KEGG" id="vfm:VFMJ11_A0790"/>
<dbReference type="HOGENOM" id="CLU_004620_2_1_6"/>
<dbReference type="Proteomes" id="UP000001857">
    <property type="component" value="Chromosome II"/>
</dbReference>
<dbReference type="GO" id="GO:0005829">
    <property type="term" value="C:cytosol"/>
    <property type="evidence" value="ECO:0007669"/>
    <property type="project" value="TreeGrafter"/>
</dbReference>
<dbReference type="GO" id="GO:0005960">
    <property type="term" value="C:glycine cleavage complex"/>
    <property type="evidence" value="ECO:0007669"/>
    <property type="project" value="TreeGrafter"/>
</dbReference>
<dbReference type="GO" id="GO:0016594">
    <property type="term" value="F:glycine binding"/>
    <property type="evidence" value="ECO:0007669"/>
    <property type="project" value="TreeGrafter"/>
</dbReference>
<dbReference type="GO" id="GO:0004375">
    <property type="term" value="F:glycine dehydrogenase (decarboxylating) activity"/>
    <property type="evidence" value="ECO:0007669"/>
    <property type="project" value="UniProtKB-EC"/>
</dbReference>
<dbReference type="GO" id="GO:0030170">
    <property type="term" value="F:pyridoxal phosphate binding"/>
    <property type="evidence" value="ECO:0007669"/>
    <property type="project" value="TreeGrafter"/>
</dbReference>
<dbReference type="GO" id="GO:0019464">
    <property type="term" value="P:glycine decarboxylation via glycine cleavage system"/>
    <property type="evidence" value="ECO:0007669"/>
    <property type="project" value="UniProtKB-UniRule"/>
</dbReference>
<dbReference type="CDD" id="cd00613">
    <property type="entry name" value="GDC-P"/>
    <property type="match status" value="2"/>
</dbReference>
<dbReference type="FunFam" id="3.40.640.10:FF:000005">
    <property type="entry name" value="Glycine dehydrogenase (decarboxylating), mitochondrial"/>
    <property type="match status" value="1"/>
</dbReference>
<dbReference type="FunFam" id="3.90.1150.10:FF:000007">
    <property type="entry name" value="Glycine dehydrogenase (decarboxylating), mitochondrial"/>
    <property type="match status" value="1"/>
</dbReference>
<dbReference type="FunFam" id="3.40.640.10:FF:000007">
    <property type="entry name" value="glycine dehydrogenase (Decarboxylating), mitochondrial"/>
    <property type="match status" value="1"/>
</dbReference>
<dbReference type="Gene3D" id="3.90.1150.10">
    <property type="entry name" value="Aspartate Aminotransferase, domain 1"/>
    <property type="match status" value="2"/>
</dbReference>
<dbReference type="Gene3D" id="3.40.640.10">
    <property type="entry name" value="Type I PLP-dependent aspartate aminotransferase-like (Major domain)"/>
    <property type="match status" value="2"/>
</dbReference>
<dbReference type="HAMAP" id="MF_00711">
    <property type="entry name" value="GcvP"/>
    <property type="match status" value="1"/>
</dbReference>
<dbReference type="InterPro" id="IPR003437">
    <property type="entry name" value="GcvP"/>
</dbReference>
<dbReference type="InterPro" id="IPR049316">
    <property type="entry name" value="GDC-P_C"/>
</dbReference>
<dbReference type="InterPro" id="IPR049315">
    <property type="entry name" value="GDC-P_N"/>
</dbReference>
<dbReference type="InterPro" id="IPR020581">
    <property type="entry name" value="GDC_P"/>
</dbReference>
<dbReference type="InterPro" id="IPR015424">
    <property type="entry name" value="PyrdxlP-dep_Trfase"/>
</dbReference>
<dbReference type="InterPro" id="IPR015421">
    <property type="entry name" value="PyrdxlP-dep_Trfase_major"/>
</dbReference>
<dbReference type="InterPro" id="IPR015422">
    <property type="entry name" value="PyrdxlP-dep_Trfase_small"/>
</dbReference>
<dbReference type="NCBIfam" id="TIGR00461">
    <property type="entry name" value="gcvP"/>
    <property type="match status" value="1"/>
</dbReference>
<dbReference type="PANTHER" id="PTHR11773:SF13">
    <property type="entry name" value="GLYCINE DEHYDROGENASE (DECARBOXYLATING)"/>
    <property type="match status" value="1"/>
</dbReference>
<dbReference type="PANTHER" id="PTHR11773">
    <property type="entry name" value="GLYCINE DEHYDROGENASE, DECARBOXYLATING"/>
    <property type="match status" value="1"/>
</dbReference>
<dbReference type="Pfam" id="PF21478">
    <property type="entry name" value="GcvP2_C"/>
    <property type="match status" value="1"/>
</dbReference>
<dbReference type="Pfam" id="PF02347">
    <property type="entry name" value="GDC-P"/>
    <property type="match status" value="2"/>
</dbReference>
<dbReference type="SUPFAM" id="SSF53383">
    <property type="entry name" value="PLP-dependent transferases"/>
    <property type="match status" value="2"/>
</dbReference>
<gene>
    <name evidence="1" type="primary">gcvP</name>
    <name type="ordered locus">VFMJ11_A0790</name>
</gene>
<reference key="1">
    <citation type="submission" date="2008-08" db="EMBL/GenBank/DDBJ databases">
        <title>Complete sequence of Vibrio fischeri strain MJ11.</title>
        <authorList>
            <person name="Mandel M.J."/>
            <person name="Stabb E.V."/>
            <person name="Ruby E.G."/>
            <person name="Ferriera S."/>
            <person name="Johnson J."/>
            <person name="Kravitz S."/>
            <person name="Beeson K."/>
            <person name="Sutton G."/>
            <person name="Rogers Y.-H."/>
            <person name="Friedman R."/>
            <person name="Frazier M."/>
            <person name="Venter J.C."/>
        </authorList>
    </citation>
    <scope>NUCLEOTIDE SEQUENCE [LARGE SCALE GENOMIC DNA]</scope>
    <source>
        <strain>MJ11</strain>
    </source>
</reference>
<feature type="chain" id="PRO_1000132461" description="Glycine dehydrogenase (decarboxylating)">
    <location>
        <begin position="1"/>
        <end position="955"/>
    </location>
</feature>
<feature type="modified residue" description="N6-(pyridoxal phosphate)lysine" evidence="1">
    <location>
        <position position="705"/>
    </location>
</feature>
<name>GCSP_ALIFM</name>
<keyword id="KW-0560">Oxidoreductase</keyword>
<keyword id="KW-0663">Pyridoxal phosphate</keyword>
<sequence length="955" mass="104739">MSQLLQQLGTDNEFIRRHNGPASSEHQHMLNTIGAETLQQLIEETVPSSIRLPQPMQLPHGLSENAMLAELKQIAQQNTLNTSYIGQGYYNTHTPNVILRNVLENPGWYTAYTPYQPEISQGRLEALLNYQQMVMDLTGLEIANASLLDEATAAAEAMTLCKRGGKSKSNIFFVADDVHPQTLAVIKTRAKFIGFDVIVDNESNLDSHDVFGALLQYPGTTGEVKDLTDLIAQAHTKKTLVVVATDLLASVLLKPVGEMGADIAIGSAQRFGVPMGYGGPHAAFMATREKLKRSMPGRVIGVSIDSKGNQALRMAMQTREQHIRREKATSNICTAQALLANMASFYAVYHGPEGLKTIARRVHHFTAIVAKALQTAGFELEHQHFFDTLTVKTEQQTDILYTKALASSINLRKFDTKLGISFDETTTVSDLVTLLAVFGIDNAECETLSAEVGKDEFAAIPKHCQRTSSFLTHPVFNTYHSETQMLRYLKKLENKDFSLTHGMIPLGSCTMKLNAVAEMLPVTWPEFGGIHPFAPLNQAAGYTTLATSLKSMLCEITGYDEFSLQPNSGASGEYAGLIAIQRYHESRGDAHRNVCLIPSSAHGTNPATASMVSMKVVVVKCDENGNIDMIDLAEKIEKHQENLSSIMITYPSTHGVYEEQVREVCDMVHAAGGQVYLDGANMNAQVGLTSPGFIGSDVSHLNLHKTFCIPHGGGGPGMGPIGVKSHLAPFLPGHTENGVQGTDYAVSAADLGSASILPISWAYIAMMGEMGLTEATKVAILNANYVMERLRPHYPVLYRGSNGRIAHECIIDIRPLKEATGISEEDIAKRLMDFGFHAPTMSFPVAGTLMVEPTESEDLAELDRFCDAMIAIREEMHKVEQGEWPLDNNPLVNAPHTQVDLMSDSWDHPYTREVACFPSSQSKDSKYWPTVNRVDNVYGDRNLICSCPSIENYEE</sequence>
<proteinExistence type="inferred from homology"/>
<evidence type="ECO:0000255" key="1">
    <source>
        <dbReference type="HAMAP-Rule" id="MF_00711"/>
    </source>
</evidence>